<keyword id="KW-0119">Carbohydrate metabolism</keyword>
<keyword id="KW-0963">Cytoplasm</keyword>
<keyword id="KW-0413">Isomerase</keyword>
<keyword id="KW-0460">Magnesium</keyword>
<keyword id="KW-0479">Metal-binding</keyword>
<keyword id="KW-1185">Reference proteome</keyword>
<keyword id="KW-0859">Xylose metabolism</keyword>
<organism>
    <name type="scientific">Lactococcus lactis subsp. lactis (strain IL1403)</name>
    <name type="common">Streptococcus lactis</name>
    <dbReference type="NCBI Taxonomy" id="272623"/>
    <lineage>
        <taxon>Bacteria</taxon>
        <taxon>Bacillati</taxon>
        <taxon>Bacillota</taxon>
        <taxon>Bacilli</taxon>
        <taxon>Lactobacillales</taxon>
        <taxon>Streptococcaceae</taxon>
        <taxon>Lactococcus</taxon>
    </lineage>
</organism>
<feature type="chain" id="PRO_0000195782" description="Xylose isomerase">
    <location>
        <begin position="1"/>
        <end position="439"/>
    </location>
</feature>
<feature type="active site" evidence="1">
    <location>
        <position position="101"/>
    </location>
</feature>
<feature type="active site" evidence="1">
    <location>
        <position position="104"/>
    </location>
</feature>
<feature type="binding site" evidence="1">
    <location>
        <position position="232"/>
    </location>
    <ligand>
        <name>Mg(2+)</name>
        <dbReference type="ChEBI" id="CHEBI:18420"/>
        <label>1</label>
    </ligand>
</feature>
<feature type="binding site" evidence="1">
    <location>
        <position position="268"/>
    </location>
    <ligand>
        <name>Mg(2+)</name>
        <dbReference type="ChEBI" id="CHEBI:18420"/>
        <label>1</label>
    </ligand>
</feature>
<feature type="binding site" evidence="1">
    <location>
        <position position="268"/>
    </location>
    <ligand>
        <name>Mg(2+)</name>
        <dbReference type="ChEBI" id="CHEBI:18420"/>
        <label>2</label>
    </ligand>
</feature>
<feature type="binding site" evidence="1">
    <location>
        <position position="271"/>
    </location>
    <ligand>
        <name>Mg(2+)</name>
        <dbReference type="ChEBI" id="CHEBI:18420"/>
        <label>2</label>
    </ligand>
</feature>
<feature type="binding site" evidence="1">
    <location>
        <position position="296"/>
    </location>
    <ligand>
        <name>Mg(2+)</name>
        <dbReference type="ChEBI" id="CHEBI:18420"/>
        <label>1</label>
    </ligand>
</feature>
<feature type="binding site" evidence="1">
    <location>
        <position position="307"/>
    </location>
    <ligand>
        <name>Mg(2+)</name>
        <dbReference type="ChEBI" id="CHEBI:18420"/>
        <label>2</label>
    </ligand>
</feature>
<feature type="binding site" evidence="1">
    <location>
        <position position="309"/>
    </location>
    <ligand>
        <name>Mg(2+)</name>
        <dbReference type="ChEBI" id="CHEBI:18420"/>
        <label>2</label>
    </ligand>
</feature>
<feature type="binding site" evidence="1">
    <location>
        <position position="339"/>
    </location>
    <ligand>
        <name>Mg(2+)</name>
        <dbReference type="ChEBI" id="CHEBI:18420"/>
        <label>1</label>
    </ligand>
</feature>
<feature type="sequence variant" description="In strain: NRRL B-4449 and IO-1.">
    <original>R</original>
    <variation>M</variation>
    <location>
        <position position="202"/>
    </location>
</feature>
<feature type="sequence variant" description="In strain: 210.">
    <original>D</original>
    <variation>Y</variation>
    <location>
        <position position="218"/>
    </location>
</feature>
<feature type="sequence variant" description="In strain: NRRL B-4449 and IO-1.">
    <original>A</original>
    <variation>S</variation>
    <location>
        <position position="247"/>
    </location>
</feature>
<feature type="sequence variant" description="In strain: NRRL B-4449 and IO-1.">
    <original>V</original>
    <variation>A</variation>
    <location>
        <position position="275"/>
    </location>
</feature>
<feature type="sequence variant" description="In strain: NRRL B-4449 and IO-1.">
    <original>T</original>
    <variation>S</variation>
    <location>
        <position position="388"/>
    </location>
</feature>
<feature type="sequence variant" description="In strain: IO-1.">
    <original>E</original>
    <variation>K</variation>
    <location>
        <position position="407"/>
    </location>
</feature>
<feature type="sequence variant" description="In strain: NRRL B-4449.">
    <original>H</original>
    <variation>Y</variation>
    <location>
        <position position="416"/>
    </location>
</feature>
<feature type="sequence conflict" description="In Ref. 2; CAC51082." evidence="2" ref="2">
    <original>L</original>
    <variation>S</variation>
    <location>
        <position position="112"/>
    </location>
</feature>
<feature type="sequence conflict" description="In Ref. 2; CAC51082." evidence="2" ref="2">
    <original>L</original>
    <variation>I</variation>
    <location>
        <position position="283"/>
    </location>
</feature>
<feature type="sequence conflict" description="In Ref. 2; CAC51082." evidence="2" ref="2">
    <original>FN</original>
    <variation>IY</variation>
    <location>
        <begin position="289"/>
        <end position="290"/>
    </location>
</feature>
<feature type="sequence conflict" description="In Ref. 2; CAC51082." evidence="2" ref="2">
    <original>A</original>
    <variation>P</variation>
    <location>
        <position position="297"/>
    </location>
</feature>
<feature type="sequence conflict" description="In Ref. 2; CAC51082." evidence="2" ref="2">
    <original>N</original>
    <variation>R</variation>
    <location>
        <position position="301"/>
    </location>
</feature>
<feature type="sequence conflict" description="In Ref. 2; CAC51082." evidence="2" ref="2">
    <original>L</original>
    <variation>H</variation>
    <location>
        <position position="304"/>
    </location>
</feature>
<feature type="sequence conflict" description="In Ref. 2; CAC51082." evidence="2" ref="2">
    <original>H</original>
    <variation>N</variation>
    <location>
        <position position="323"/>
    </location>
</feature>
<feature type="sequence conflict" description="In Ref. 2; CAC51082." evidence="2" ref="2">
    <original>E</original>
    <variation>G</variation>
    <location>
        <position position="407"/>
    </location>
</feature>
<reference key="1">
    <citation type="submission" date="1998-09" db="EMBL/GenBank/DDBJ databases">
        <title>The xylose and xylan loci of Lactococcus lactis.</title>
        <authorList>
            <person name="Erlandson K.A."/>
            <person name="Park J.-H."/>
            <person name="Delamarre S.C."/>
            <person name="El Khal W."/>
            <person name="Kao H.-H."/>
            <person name="Basaran P."/>
            <person name="Brydges S.D."/>
            <person name="Batt C.A."/>
        </authorList>
    </citation>
    <scope>NUCLEOTIDE SEQUENCE [GENOMIC DNA]</scope>
    <source>
        <strain>210</strain>
        <strain>ATCC 15577 / DSM 20175 / JCM 1158 / NRRL B-4449 / NCFB 2738</strain>
        <strain>IO-1</strain>
    </source>
</reference>
<reference key="2">
    <citation type="submission" date="2001-08" db="EMBL/GenBank/DDBJ databases">
        <title>Lactococcus lactis xylose isomerase.</title>
        <authorList>
            <person name="Basaran P."/>
        </authorList>
    </citation>
    <scope>NUCLEOTIDE SEQUENCE [GENOMIC DNA]</scope>
</reference>
<reference key="3">
    <citation type="journal article" date="2001" name="Genome Res.">
        <title>The complete genome sequence of the lactic acid bacterium Lactococcus lactis ssp. lactis IL1403.</title>
        <authorList>
            <person name="Bolotin A."/>
            <person name="Wincker P."/>
            <person name="Mauger S."/>
            <person name="Jaillon O."/>
            <person name="Malarme K."/>
            <person name="Weissenbach J."/>
            <person name="Ehrlich S.D."/>
            <person name="Sorokin A."/>
        </authorList>
    </citation>
    <scope>NUCLEOTIDE SEQUENCE [LARGE SCALE GENOMIC DNA]</scope>
    <source>
        <strain>IL1403</strain>
    </source>
</reference>
<dbReference type="EC" id="5.3.1.5"/>
<dbReference type="EMBL" id="AF092040">
    <property type="protein sequence ID" value="AAD20243.1"/>
    <property type="molecule type" value="Genomic_DNA"/>
</dbReference>
<dbReference type="EMBL" id="AF092041">
    <property type="protein sequence ID" value="AAD20249.1"/>
    <property type="molecule type" value="Genomic_DNA"/>
</dbReference>
<dbReference type="EMBL" id="AF092042">
    <property type="protein sequence ID" value="AAD20255.1"/>
    <property type="molecule type" value="Genomic_DNA"/>
</dbReference>
<dbReference type="EMBL" id="AJ344090">
    <property type="protein sequence ID" value="CAC51082.1"/>
    <property type="molecule type" value="Genomic_DNA"/>
</dbReference>
<dbReference type="EMBL" id="AE005176">
    <property type="protein sequence ID" value="AAK05607.1"/>
    <property type="molecule type" value="Genomic_DNA"/>
</dbReference>
<dbReference type="PIR" id="E86813">
    <property type="entry name" value="E86813"/>
</dbReference>
<dbReference type="RefSeq" id="NP_267665.1">
    <property type="nucleotide sequence ID" value="NC_002662.1"/>
</dbReference>
<dbReference type="RefSeq" id="WP_010906012.1">
    <property type="nucleotide sequence ID" value="NC_002662.1"/>
</dbReference>
<dbReference type="SMR" id="Q9CFG7"/>
<dbReference type="PaxDb" id="272623-L0230"/>
<dbReference type="EnsemblBacteria" id="AAK05607">
    <property type="protein sequence ID" value="AAK05607"/>
    <property type="gene ID" value="L0230"/>
</dbReference>
<dbReference type="KEGG" id="lla:L0230"/>
<dbReference type="PATRIC" id="fig|272623.7.peg.1619"/>
<dbReference type="eggNOG" id="COG2115">
    <property type="taxonomic scope" value="Bacteria"/>
</dbReference>
<dbReference type="HOGENOM" id="CLU_037261_1_0_9"/>
<dbReference type="OrthoDB" id="9763981at2"/>
<dbReference type="SABIO-RK" id="Q9CFG7"/>
<dbReference type="Proteomes" id="UP000002196">
    <property type="component" value="Chromosome"/>
</dbReference>
<dbReference type="GO" id="GO:0005737">
    <property type="term" value="C:cytoplasm"/>
    <property type="evidence" value="ECO:0007669"/>
    <property type="project" value="UniProtKB-SubCell"/>
</dbReference>
<dbReference type="GO" id="GO:0000287">
    <property type="term" value="F:magnesium ion binding"/>
    <property type="evidence" value="ECO:0007669"/>
    <property type="project" value="UniProtKB-UniRule"/>
</dbReference>
<dbReference type="GO" id="GO:0009045">
    <property type="term" value="F:xylose isomerase activity"/>
    <property type="evidence" value="ECO:0007669"/>
    <property type="project" value="UniProtKB-UniRule"/>
</dbReference>
<dbReference type="GO" id="GO:0042732">
    <property type="term" value="P:D-xylose metabolic process"/>
    <property type="evidence" value="ECO:0007669"/>
    <property type="project" value="UniProtKB-UniRule"/>
</dbReference>
<dbReference type="Gene3D" id="3.20.20.150">
    <property type="entry name" value="Divalent-metal-dependent TIM barrel enzymes"/>
    <property type="match status" value="1"/>
</dbReference>
<dbReference type="HAMAP" id="MF_00455">
    <property type="entry name" value="Xylose_isom_A"/>
    <property type="match status" value="1"/>
</dbReference>
<dbReference type="InterPro" id="IPR036237">
    <property type="entry name" value="Xyl_isomerase-like_sf"/>
</dbReference>
<dbReference type="InterPro" id="IPR013022">
    <property type="entry name" value="Xyl_isomerase-like_TIM-brl"/>
</dbReference>
<dbReference type="InterPro" id="IPR013452">
    <property type="entry name" value="Xylose_isom_bac"/>
</dbReference>
<dbReference type="InterPro" id="IPR001998">
    <property type="entry name" value="Xylose_isomerase"/>
</dbReference>
<dbReference type="NCBIfam" id="NF003998">
    <property type="entry name" value="PRK05474.1"/>
    <property type="match status" value="1"/>
</dbReference>
<dbReference type="NCBIfam" id="TIGR02630">
    <property type="entry name" value="xylose_isom_A"/>
    <property type="match status" value="1"/>
</dbReference>
<dbReference type="PANTHER" id="PTHR48408">
    <property type="match status" value="1"/>
</dbReference>
<dbReference type="PANTHER" id="PTHR48408:SF1">
    <property type="entry name" value="XYLOSE ISOMERASE"/>
    <property type="match status" value="1"/>
</dbReference>
<dbReference type="Pfam" id="PF01261">
    <property type="entry name" value="AP_endonuc_2"/>
    <property type="match status" value="1"/>
</dbReference>
<dbReference type="PRINTS" id="PR00688">
    <property type="entry name" value="XYLOSISMRASE"/>
</dbReference>
<dbReference type="SUPFAM" id="SSF51658">
    <property type="entry name" value="Xylose isomerase-like"/>
    <property type="match status" value="1"/>
</dbReference>
<dbReference type="PROSITE" id="PS51415">
    <property type="entry name" value="XYLOSE_ISOMERASE"/>
    <property type="match status" value="1"/>
</dbReference>
<protein>
    <recommendedName>
        <fullName>Xylose isomerase</fullName>
        <ecNumber>5.3.1.5</ecNumber>
    </recommendedName>
</protein>
<evidence type="ECO:0000250" key="1"/>
<evidence type="ECO:0000305" key="2"/>
<name>XYLA_LACLA</name>
<sequence length="439" mass="49618">MAYFNDIAPIKYEGTKTKNMFAFRHYNPEEVVAGKTMEEQLHFALAFWHTITMDGSDPFGGATMERPWDLEGGSELDRAHRRVDAFFEIAEKLGVKYYCFHDIDIAPTGNSLKEFYANLDEITDHLLEKQKATGIKLLWNTANMFSNPRYMNGVSTSNRAEVFAYGAAQVKKGLELSKKLGGENYVFWGGREGYESLLNTDRGLEMDHMAKFFHLAIDYAKSINHLPIFLIEPKPKEPMTHQYDFDAATALAFLQKYDLDKYFKLNLETNHAWLVGHTFEHELNTARTFNALGSIDANQGNYLLGWDTDEFPTLVIDITLAMHQILLNGGLGKGGINFDAKVRRTSFKAEDLILAHIAGMDTYARALKGAAAIIEDKFLSDIVDERYTSYKNTEVGQSIENGTATFESLAAFALEHGDDIELDSNHLEYIKSVLNDYLV</sequence>
<comment type="catalytic activity">
    <reaction>
        <text>alpha-D-xylose = alpha-D-xylulofuranose</text>
        <dbReference type="Rhea" id="RHEA:22816"/>
        <dbReference type="ChEBI" id="CHEBI:28518"/>
        <dbReference type="ChEBI" id="CHEBI:188998"/>
        <dbReference type="EC" id="5.3.1.5"/>
    </reaction>
</comment>
<comment type="cofactor">
    <cofactor evidence="1">
        <name>Mg(2+)</name>
        <dbReference type="ChEBI" id="CHEBI:18420"/>
    </cofactor>
    <text evidence="1">Binds 2 magnesium ions per subunit.</text>
</comment>
<comment type="subunit">
    <text evidence="1">Homotetramer.</text>
</comment>
<comment type="subcellular location">
    <subcellularLocation>
        <location evidence="1">Cytoplasm</location>
    </subcellularLocation>
</comment>
<comment type="similarity">
    <text evidence="2">Belongs to the xylose isomerase family.</text>
</comment>
<accession>Q9CFG7</accession>
<accession>Q93K17</accession>
<accession>Q9RAV8</accession>
<accession>Q9X416</accession>
<accession>Q9X422</accession>
<gene>
    <name type="primary">xylA</name>
    <name type="ordered locus">LL1509</name>
    <name type="ORF">L0230</name>
</gene>
<proteinExistence type="inferred from homology"/>